<accession>B1YYR8</accession>
<dbReference type="EC" id="3.5.99.7" evidence="1"/>
<dbReference type="EMBL" id="CP001026">
    <property type="protein sequence ID" value="ACB65778.1"/>
    <property type="molecule type" value="Genomic_DNA"/>
</dbReference>
<dbReference type="RefSeq" id="WP_012365215.1">
    <property type="nucleotide sequence ID" value="NC_010552.1"/>
</dbReference>
<dbReference type="SMR" id="B1YYR8"/>
<dbReference type="KEGG" id="bac:BamMC406_3308"/>
<dbReference type="HOGENOM" id="CLU_048897_2_1_4"/>
<dbReference type="OrthoDB" id="9801249at2"/>
<dbReference type="Proteomes" id="UP000001680">
    <property type="component" value="Chromosome 2"/>
</dbReference>
<dbReference type="GO" id="GO:0008660">
    <property type="term" value="F:1-aminocyclopropane-1-carboxylate deaminase activity"/>
    <property type="evidence" value="ECO:0007669"/>
    <property type="project" value="UniProtKB-UniRule"/>
</dbReference>
<dbReference type="GO" id="GO:0019148">
    <property type="term" value="F:D-cysteine desulfhydrase activity"/>
    <property type="evidence" value="ECO:0007669"/>
    <property type="project" value="TreeGrafter"/>
</dbReference>
<dbReference type="GO" id="GO:0030170">
    <property type="term" value="F:pyridoxal phosphate binding"/>
    <property type="evidence" value="ECO:0007669"/>
    <property type="project" value="InterPro"/>
</dbReference>
<dbReference type="GO" id="GO:0018871">
    <property type="term" value="P:1-aminocyclopropane-1-carboxylate metabolic process"/>
    <property type="evidence" value="ECO:0007669"/>
    <property type="project" value="UniProtKB-UniRule"/>
</dbReference>
<dbReference type="GO" id="GO:0009310">
    <property type="term" value="P:amine catabolic process"/>
    <property type="evidence" value="ECO:0007669"/>
    <property type="project" value="InterPro"/>
</dbReference>
<dbReference type="CDD" id="cd06449">
    <property type="entry name" value="ACCD"/>
    <property type="match status" value="1"/>
</dbReference>
<dbReference type="FunFam" id="3.40.50.1100:FF:000048">
    <property type="entry name" value="1-aminocyclopropane-1-carboxylate deaminase"/>
    <property type="match status" value="1"/>
</dbReference>
<dbReference type="Gene3D" id="3.40.50.1100">
    <property type="match status" value="2"/>
</dbReference>
<dbReference type="HAMAP" id="MF_00807">
    <property type="entry name" value="ACC_deaminase"/>
    <property type="match status" value="1"/>
</dbReference>
<dbReference type="InterPro" id="IPR027278">
    <property type="entry name" value="ACCD_DCysDesulf"/>
</dbReference>
<dbReference type="InterPro" id="IPR005965">
    <property type="entry name" value="ACP_carboxylate_deaminase"/>
</dbReference>
<dbReference type="InterPro" id="IPR020601">
    <property type="entry name" value="ACP_carboxylate_deaminase_bac"/>
</dbReference>
<dbReference type="InterPro" id="IPR001926">
    <property type="entry name" value="TrpB-like_PALP"/>
</dbReference>
<dbReference type="InterPro" id="IPR036052">
    <property type="entry name" value="TrpB-like_PALP_sf"/>
</dbReference>
<dbReference type="NCBIfam" id="TIGR01274">
    <property type="entry name" value="ACC_deam"/>
    <property type="match status" value="1"/>
</dbReference>
<dbReference type="PANTHER" id="PTHR43780">
    <property type="entry name" value="1-AMINOCYCLOPROPANE-1-CARBOXYLATE DEAMINASE-RELATED"/>
    <property type="match status" value="1"/>
</dbReference>
<dbReference type="PANTHER" id="PTHR43780:SF2">
    <property type="entry name" value="1-AMINOCYCLOPROPANE-1-CARBOXYLATE DEAMINASE-RELATED"/>
    <property type="match status" value="1"/>
</dbReference>
<dbReference type="Pfam" id="PF00291">
    <property type="entry name" value="PALP"/>
    <property type="match status" value="1"/>
</dbReference>
<dbReference type="PIRSF" id="PIRSF006278">
    <property type="entry name" value="ACCD_DCysDesulf"/>
    <property type="match status" value="1"/>
</dbReference>
<dbReference type="SUPFAM" id="SSF53686">
    <property type="entry name" value="Tryptophan synthase beta subunit-like PLP-dependent enzymes"/>
    <property type="match status" value="1"/>
</dbReference>
<evidence type="ECO:0000255" key="1">
    <source>
        <dbReference type="HAMAP-Rule" id="MF_00807"/>
    </source>
</evidence>
<comment type="function">
    <text evidence="1">Catalyzes a cyclopropane ring-opening reaction, the irreversible conversion of 1-aminocyclopropane-1-carboxylate (ACC) to ammonia and alpha-ketobutyrate. Allows growth on ACC as a nitrogen source.</text>
</comment>
<comment type="catalytic activity">
    <reaction evidence="1">
        <text>1-aminocyclopropane-1-carboxylate + H2O = 2-oxobutanoate + NH4(+)</text>
        <dbReference type="Rhea" id="RHEA:16933"/>
        <dbReference type="ChEBI" id="CHEBI:15377"/>
        <dbReference type="ChEBI" id="CHEBI:16763"/>
        <dbReference type="ChEBI" id="CHEBI:28938"/>
        <dbReference type="ChEBI" id="CHEBI:58360"/>
        <dbReference type="EC" id="3.5.99.7"/>
    </reaction>
</comment>
<comment type="cofactor">
    <cofactor evidence="1">
        <name>pyridoxal 5'-phosphate</name>
        <dbReference type="ChEBI" id="CHEBI:597326"/>
    </cofactor>
</comment>
<comment type="subunit">
    <text evidence="1">Homotrimer.</text>
</comment>
<comment type="similarity">
    <text evidence="1">Belongs to the ACC deaminase/D-cysteine desulfhydrase family.</text>
</comment>
<protein>
    <recommendedName>
        <fullName evidence="1">1-aminocyclopropane-1-carboxylate deaminase</fullName>
        <shortName evidence="1">ACC deaminase</shortName>
        <shortName evidence="1">ACCD</shortName>
        <ecNumber evidence="1">3.5.99.7</ecNumber>
    </recommendedName>
</protein>
<name>1A1D_BURA4</name>
<gene>
    <name evidence="1" type="primary">acdS</name>
    <name type="ordered locus">BamMC406_3308</name>
</gene>
<organism>
    <name type="scientific">Burkholderia ambifaria (strain MC40-6)</name>
    <dbReference type="NCBI Taxonomy" id="398577"/>
    <lineage>
        <taxon>Bacteria</taxon>
        <taxon>Pseudomonadati</taxon>
        <taxon>Pseudomonadota</taxon>
        <taxon>Betaproteobacteria</taxon>
        <taxon>Burkholderiales</taxon>
        <taxon>Burkholderiaceae</taxon>
        <taxon>Burkholderia</taxon>
        <taxon>Burkholderia cepacia complex</taxon>
    </lineage>
</organism>
<sequence>MNLQRFPRYPLTFGPTPIQPLKRLSAHLGGKVKLYAKREDCNSGLAFGGNKTRKLEYLIPDALAQGADTLVSIGGVQSNQTRQVAAVAAHLGMKCVLVQEHWVNYDDPVYDRVGNIQLSRMMGADVRLVADGFDIGIRRSWEEAMESVRQAGGKPYPIPAGCSEHPLGGLGFVGFAEEVRAQEAELGFKFDYIVVCSVTGSTQAGMVVGFAADGRADRVIGIDASATPEKTHAQITRIARHTAEIVELGRRIDEQDVVLDTRYAGPEYGLPNDGTLEAIRLCARLEGVLTDPVYEGKSMHGMIDKVRLGEFEPGSKVLYAHLGGVPALSAYAEIFRNG</sequence>
<proteinExistence type="inferred from homology"/>
<feature type="chain" id="PRO_1000134007" description="1-aminocyclopropane-1-carboxylate deaminase">
    <location>
        <begin position="1"/>
        <end position="338"/>
    </location>
</feature>
<feature type="active site" description="Nucleophile" evidence="1">
    <location>
        <position position="78"/>
    </location>
</feature>
<feature type="modified residue" description="N6-(pyridoxal phosphate)lysine" evidence="1">
    <location>
        <position position="51"/>
    </location>
</feature>
<keyword id="KW-0378">Hydrolase</keyword>
<keyword id="KW-0663">Pyridoxal phosphate</keyword>
<reference key="1">
    <citation type="submission" date="2008-04" db="EMBL/GenBank/DDBJ databases">
        <title>Complete sequence of chromosome 2 of Burkholderia ambifaria MC40-6.</title>
        <authorList>
            <person name="Copeland A."/>
            <person name="Lucas S."/>
            <person name="Lapidus A."/>
            <person name="Glavina del Rio T."/>
            <person name="Dalin E."/>
            <person name="Tice H."/>
            <person name="Pitluck S."/>
            <person name="Chain P."/>
            <person name="Malfatti S."/>
            <person name="Shin M."/>
            <person name="Vergez L."/>
            <person name="Lang D."/>
            <person name="Schmutz J."/>
            <person name="Larimer F."/>
            <person name="Land M."/>
            <person name="Hauser L."/>
            <person name="Kyrpides N."/>
            <person name="Lykidis A."/>
            <person name="Ramette A."/>
            <person name="Konstantinidis K."/>
            <person name="Tiedje J."/>
            <person name="Richardson P."/>
        </authorList>
    </citation>
    <scope>NUCLEOTIDE SEQUENCE [LARGE SCALE GENOMIC DNA]</scope>
    <source>
        <strain>MC40-6</strain>
    </source>
</reference>